<name>CKL3_ARATH</name>
<protein>
    <recommendedName>
        <fullName evidence="8">Casein kinase 1-like protein 3</fullName>
        <ecNumber evidence="5">2.7.11.1</ecNumber>
    </recommendedName>
    <alternativeName>
        <fullName evidence="6">Protein CASEIN KINASE I-LIKE 3</fullName>
        <shortName evidence="7">CK1.3</shortName>
    </alternativeName>
</protein>
<evidence type="ECO:0000255" key="1">
    <source>
        <dbReference type="PROSITE-ProRule" id="PRU00159"/>
    </source>
</evidence>
<evidence type="ECO:0000256" key="2">
    <source>
        <dbReference type="SAM" id="MobiDB-lite"/>
    </source>
</evidence>
<evidence type="ECO:0000269" key="3">
    <source>
    </source>
</evidence>
<evidence type="ECO:0000269" key="4">
    <source>
    </source>
</evidence>
<evidence type="ECO:0000269" key="5">
    <source>
    </source>
</evidence>
<evidence type="ECO:0000303" key="6">
    <source>
    </source>
</evidence>
<evidence type="ECO:0000303" key="7">
    <source>
    </source>
</evidence>
<evidence type="ECO:0000305" key="8"/>
<evidence type="ECO:0000312" key="9">
    <source>
        <dbReference type="Araport" id="AT4G28880"/>
    </source>
</evidence>
<evidence type="ECO:0000312" key="10">
    <source>
        <dbReference type="EMBL" id="CAA22964.2"/>
    </source>
</evidence>
<dbReference type="EC" id="2.7.11.1" evidence="5"/>
<dbReference type="EMBL" id="AY943852">
    <property type="protein sequence ID" value="AAY24542.1"/>
    <property type="molecule type" value="mRNA"/>
</dbReference>
<dbReference type="EMBL" id="AL035353">
    <property type="protein sequence ID" value="CAA22964.2"/>
    <property type="status" value="ALT_SEQ"/>
    <property type="molecule type" value="Genomic_DNA"/>
</dbReference>
<dbReference type="EMBL" id="AL161573">
    <property type="protein sequence ID" value="CAB81476.1"/>
    <property type="status" value="ALT_SEQ"/>
    <property type="molecule type" value="Genomic_DNA"/>
</dbReference>
<dbReference type="EMBL" id="CP002687">
    <property type="protein sequence ID" value="AEE85558.1"/>
    <property type="molecule type" value="Genomic_DNA"/>
</dbReference>
<dbReference type="EMBL" id="CP002687">
    <property type="protein sequence ID" value="ANM67211.1"/>
    <property type="molecule type" value="Genomic_DNA"/>
</dbReference>
<dbReference type="EMBL" id="CP002687">
    <property type="protein sequence ID" value="ANM67212.1"/>
    <property type="molecule type" value="Genomic_DNA"/>
</dbReference>
<dbReference type="EMBL" id="CP002687">
    <property type="protein sequence ID" value="ANM67213.1"/>
    <property type="molecule type" value="Genomic_DNA"/>
</dbReference>
<dbReference type="EMBL" id="AY058842">
    <property type="protein sequence ID" value="AAL24230.1"/>
    <property type="molecule type" value="mRNA"/>
</dbReference>
<dbReference type="EMBL" id="AY079031">
    <property type="protein sequence ID" value="AAL79581.1"/>
    <property type="molecule type" value="mRNA"/>
</dbReference>
<dbReference type="EMBL" id="AK118601">
    <property type="protein sequence ID" value="BAC43200.1"/>
    <property type="molecule type" value="mRNA"/>
</dbReference>
<dbReference type="PIR" id="T04511">
    <property type="entry name" value="T04511"/>
</dbReference>
<dbReference type="RefSeq" id="NP_001329054.1">
    <property type="nucleotide sequence ID" value="NM_001341953.1"/>
</dbReference>
<dbReference type="RefSeq" id="NP_001329055.1">
    <property type="nucleotide sequence ID" value="NM_001341952.1"/>
</dbReference>
<dbReference type="RefSeq" id="NP_001329056.1">
    <property type="nucleotide sequence ID" value="NM_001341951.1"/>
</dbReference>
<dbReference type="RefSeq" id="NP_194617.2">
    <property type="nucleotide sequence ID" value="NM_119032.5"/>
</dbReference>
<dbReference type="SMR" id="Q93Z18"/>
<dbReference type="FunCoup" id="Q93Z18">
    <property type="interactions" value="2558"/>
</dbReference>
<dbReference type="IntAct" id="Q93Z18">
    <property type="interactions" value="5"/>
</dbReference>
<dbReference type="STRING" id="3702.Q93Z18"/>
<dbReference type="iPTMnet" id="Q93Z18"/>
<dbReference type="PaxDb" id="3702-AT4G28880.1"/>
<dbReference type="ProteomicsDB" id="246872"/>
<dbReference type="DNASU" id="829009"/>
<dbReference type="EnsemblPlants" id="AT4G28880.1">
    <property type="protein sequence ID" value="AT4G28880.1"/>
    <property type="gene ID" value="AT4G28880"/>
</dbReference>
<dbReference type="EnsemblPlants" id="AT4G28880.2">
    <property type="protein sequence ID" value="AT4G28880.2"/>
    <property type="gene ID" value="AT4G28880"/>
</dbReference>
<dbReference type="EnsemblPlants" id="AT4G28880.3">
    <property type="protein sequence ID" value="AT4G28880.3"/>
    <property type="gene ID" value="AT4G28880"/>
</dbReference>
<dbReference type="EnsemblPlants" id="AT4G28880.4">
    <property type="protein sequence ID" value="AT4G28880.4"/>
    <property type="gene ID" value="AT4G28880"/>
</dbReference>
<dbReference type="GeneID" id="829009"/>
<dbReference type="Gramene" id="AT4G28880.1">
    <property type="protein sequence ID" value="AT4G28880.1"/>
    <property type="gene ID" value="AT4G28880"/>
</dbReference>
<dbReference type="Gramene" id="AT4G28880.2">
    <property type="protein sequence ID" value="AT4G28880.2"/>
    <property type="gene ID" value="AT4G28880"/>
</dbReference>
<dbReference type="Gramene" id="AT4G28880.3">
    <property type="protein sequence ID" value="AT4G28880.3"/>
    <property type="gene ID" value="AT4G28880"/>
</dbReference>
<dbReference type="Gramene" id="AT4G28880.4">
    <property type="protein sequence ID" value="AT4G28880.4"/>
    <property type="gene ID" value="AT4G28880"/>
</dbReference>
<dbReference type="KEGG" id="ath:AT4G28880"/>
<dbReference type="Araport" id="AT4G28880"/>
<dbReference type="TAIR" id="AT4G28880">
    <property type="gene designation" value="CKL3"/>
</dbReference>
<dbReference type="eggNOG" id="KOG1164">
    <property type="taxonomic scope" value="Eukaryota"/>
</dbReference>
<dbReference type="HOGENOM" id="CLU_019279_2_3_1"/>
<dbReference type="InParanoid" id="Q93Z18"/>
<dbReference type="OMA" id="VYDWTVR"/>
<dbReference type="OrthoDB" id="5800476at2759"/>
<dbReference type="PhylomeDB" id="Q93Z18"/>
<dbReference type="PRO" id="PR:Q93Z18"/>
<dbReference type="Proteomes" id="UP000006548">
    <property type="component" value="Chromosome 4"/>
</dbReference>
<dbReference type="ExpressionAtlas" id="Q93Z18">
    <property type="expression patterns" value="baseline and differential"/>
</dbReference>
<dbReference type="GO" id="GO:0005737">
    <property type="term" value="C:cytoplasm"/>
    <property type="evidence" value="ECO:0000314"/>
    <property type="project" value="UniProtKB"/>
</dbReference>
<dbReference type="GO" id="GO:0005634">
    <property type="term" value="C:nucleus"/>
    <property type="evidence" value="ECO:0000314"/>
    <property type="project" value="UniProtKB"/>
</dbReference>
<dbReference type="GO" id="GO:0005524">
    <property type="term" value="F:ATP binding"/>
    <property type="evidence" value="ECO:0007669"/>
    <property type="project" value="UniProtKB-KW"/>
</dbReference>
<dbReference type="GO" id="GO:0106310">
    <property type="term" value="F:protein serine kinase activity"/>
    <property type="evidence" value="ECO:0007669"/>
    <property type="project" value="RHEA"/>
</dbReference>
<dbReference type="GO" id="GO:0004674">
    <property type="term" value="F:protein serine/threonine kinase activity"/>
    <property type="evidence" value="ECO:0000314"/>
    <property type="project" value="TAIR"/>
</dbReference>
<dbReference type="GO" id="GO:0009785">
    <property type="term" value="P:blue light signaling pathway"/>
    <property type="evidence" value="ECO:0000315"/>
    <property type="project" value="TAIR"/>
</dbReference>
<dbReference type="GO" id="GO:0009640">
    <property type="term" value="P:photomorphogenesis"/>
    <property type="evidence" value="ECO:0000315"/>
    <property type="project" value="TAIR"/>
</dbReference>
<dbReference type="GO" id="GO:0009637">
    <property type="term" value="P:response to blue light"/>
    <property type="evidence" value="ECO:0000270"/>
    <property type="project" value="TAIR"/>
</dbReference>
<dbReference type="FunFam" id="1.10.510.10:FF:000325">
    <property type="entry name" value="Casein kinase I isoform delta-like"/>
    <property type="match status" value="1"/>
</dbReference>
<dbReference type="Gene3D" id="1.10.510.10">
    <property type="entry name" value="Transferase(Phosphotransferase) domain 1"/>
    <property type="match status" value="1"/>
</dbReference>
<dbReference type="InterPro" id="IPR050235">
    <property type="entry name" value="CK1_Ser-Thr_kinase"/>
</dbReference>
<dbReference type="InterPro" id="IPR011009">
    <property type="entry name" value="Kinase-like_dom_sf"/>
</dbReference>
<dbReference type="InterPro" id="IPR000719">
    <property type="entry name" value="Prot_kinase_dom"/>
</dbReference>
<dbReference type="InterPro" id="IPR017441">
    <property type="entry name" value="Protein_kinase_ATP_BS"/>
</dbReference>
<dbReference type="InterPro" id="IPR008271">
    <property type="entry name" value="Ser/Thr_kinase_AS"/>
</dbReference>
<dbReference type="PANTHER" id="PTHR11909">
    <property type="entry name" value="CASEIN KINASE-RELATED"/>
    <property type="match status" value="1"/>
</dbReference>
<dbReference type="Pfam" id="PF00069">
    <property type="entry name" value="Pkinase"/>
    <property type="match status" value="1"/>
</dbReference>
<dbReference type="SMART" id="SM00220">
    <property type="entry name" value="S_TKc"/>
    <property type="match status" value="1"/>
</dbReference>
<dbReference type="SUPFAM" id="SSF56112">
    <property type="entry name" value="Protein kinase-like (PK-like)"/>
    <property type="match status" value="1"/>
</dbReference>
<dbReference type="PROSITE" id="PS00107">
    <property type="entry name" value="PROTEIN_KINASE_ATP"/>
    <property type="match status" value="1"/>
</dbReference>
<dbReference type="PROSITE" id="PS50011">
    <property type="entry name" value="PROTEIN_KINASE_DOM"/>
    <property type="match status" value="1"/>
</dbReference>
<dbReference type="PROSITE" id="PS00108">
    <property type="entry name" value="PROTEIN_KINASE_ST"/>
    <property type="match status" value="1"/>
</dbReference>
<organism>
    <name type="scientific">Arabidopsis thaliana</name>
    <name type="common">Mouse-ear cress</name>
    <dbReference type="NCBI Taxonomy" id="3702"/>
    <lineage>
        <taxon>Eukaryota</taxon>
        <taxon>Viridiplantae</taxon>
        <taxon>Streptophyta</taxon>
        <taxon>Embryophyta</taxon>
        <taxon>Tracheophyta</taxon>
        <taxon>Spermatophyta</taxon>
        <taxon>Magnoliopsida</taxon>
        <taxon>eudicotyledons</taxon>
        <taxon>Gunneridae</taxon>
        <taxon>Pentapetalae</taxon>
        <taxon>rosids</taxon>
        <taxon>malvids</taxon>
        <taxon>Brassicales</taxon>
        <taxon>Brassicaceae</taxon>
        <taxon>Camelineae</taxon>
        <taxon>Arabidopsis</taxon>
    </lineage>
</organism>
<keyword id="KW-0067">ATP-binding</keyword>
<keyword id="KW-0963">Cytoplasm</keyword>
<keyword id="KW-0418">Kinase</keyword>
<keyword id="KW-0547">Nucleotide-binding</keyword>
<keyword id="KW-0539">Nucleus</keyword>
<keyword id="KW-0597">Phosphoprotein</keyword>
<keyword id="KW-1185">Reference proteome</keyword>
<keyword id="KW-0723">Serine/threonine-protein kinase</keyword>
<keyword id="KW-0808">Transferase</keyword>
<proteinExistence type="evidence at protein level"/>
<reference key="1">
    <citation type="journal article" date="2005" name="Plant Cell">
        <title>Plasmodesmal-associated protein kinase in tobacco and Arabidopsis recognizes a subset of non-cell-autonomous proteins.</title>
        <authorList>
            <person name="Lee J.-Y."/>
            <person name="Taoka K."/>
            <person name="Yoo B.-C."/>
            <person name="Ben-Nissan G."/>
            <person name="Kim D.-J."/>
            <person name="Lucas W.J."/>
        </authorList>
    </citation>
    <scope>NUCLEOTIDE SEQUENCE [MRNA]</scope>
    <scope>SUBCELLULAR LOCATION</scope>
    <scope>GENE FAMILY</scope>
    <scope>NOMENCLATURE</scope>
</reference>
<reference key="2">
    <citation type="journal article" date="1999" name="Nature">
        <title>Sequence and analysis of chromosome 4 of the plant Arabidopsis thaliana.</title>
        <authorList>
            <person name="Mayer K.F.X."/>
            <person name="Schueller C."/>
            <person name="Wambutt R."/>
            <person name="Murphy G."/>
            <person name="Volckaert G."/>
            <person name="Pohl T."/>
            <person name="Duesterhoeft A."/>
            <person name="Stiekema W."/>
            <person name="Entian K.-D."/>
            <person name="Terryn N."/>
            <person name="Harris B."/>
            <person name="Ansorge W."/>
            <person name="Brandt P."/>
            <person name="Grivell L.A."/>
            <person name="Rieger M."/>
            <person name="Weichselgartner M."/>
            <person name="de Simone V."/>
            <person name="Obermaier B."/>
            <person name="Mache R."/>
            <person name="Mueller M."/>
            <person name="Kreis M."/>
            <person name="Delseny M."/>
            <person name="Puigdomenech P."/>
            <person name="Watson M."/>
            <person name="Schmidtheini T."/>
            <person name="Reichert B."/>
            <person name="Portetelle D."/>
            <person name="Perez-Alonso M."/>
            <person name="Boutry M."/>
            <person name="Bancroft I."/>
            <person name="Vos P."/>
            <person name="Hoheisel J."/>
            <person name="Zimmermann W."/>
            <person name="Wedler H."/>
            <person name="Ridley P."/>
            <person name="Langham S.-A."/>
            <person name="McCullagh B."/>
            <person name="Bilham L."/>
            <person name="Robben J."/>
            <person name="van der Schueren J."/>
            <person name="Grymonprez B."/>
            <person name="Chuang Y.-J."/>
            <person name="Vandenbussche F."/>
            <person name="Braeken M."/>
            <person name="Weltjens I."/>
            <person name="Voet M."/>
            <person name="Bastiaens I."/>
            <person name="Aert R."/>
            <person name="Defoor E."/>
            <person name="Weitzenegger T."/>
            <person name="Bothe G."/>
            <person name="Ramsperger U."/>
            <person name="Hilbert H."/>
            <person name="Braun M."/>
            <person name="Holzer E."/>
            <person name="Brandt A."/>
            <person name="Peters S."/>
            <person name="van Staveren M."/>
            <person name="Dirkse W."/>
            <person name="Mooijman P."/>
            <person name="Klein Lankhorst R."/>
            <person name="Rose M."/>
            <person name="Hauf J."/>
            <person name="Koetter P."/>
            <person name="Berneiser S."/>
            <person name="Hempel S."/>
            <person name="Feldpausch M."/>
            <person name="Lamberth S."/>
            <person name="Van den Daele H."/>
            <person name="De Keyser A."/>
            <person name="Buysshaert C."/>
            <person name="Gielen J."/>
            <person name="Villarroel R."/>
            <person name="De Clercq R."/>
            <person name="van Montagu M."/>
            <person name="Rogers J."/>
            <person name="Cronin A."/>
            <person name="Quail M.A."/>
            <person name="Bray-Allen S."/>
            <person name="Clark L."/>
            <person name="Doggett J."/>
            <person name="Hall S."/>
            <person name="Kay M."/>
            <person name="Lennard N."/>
            <person name="McLay K."/>
            <person name="Mayes R."/>
            <person name="Pettett A."/>
            <person name="Rajandream M.A."/>
            <person name="Lyne M."/>
            <person name="Benes V."/>
            <person name="Rechmann S."/>
            <person name="Borkova D."/>
            <person name="Bloecker H."/>
            <person name="Scharfe M."/>
            <person name="Grimm M."/>
            <person name="Loehnert T.-H."/>
            <person name="Dose S."/>
            <person name="de Haan M."/>
            <person name="Maarse A.C."/>
            <person name="Schaefer M."/>
            <person name="Mueller-Auer S."/>
            <person name="Gabel C."/>
            <person name="Fuchs M."/>
            <person name="Fartmann B."/>
            <person name="Granderath K."/>
            <person name="Dauner D."/>
            <person name="Herzl A."/>
            <person name="Neumann S."/>
            <person name="Argiriou A."/>
            <person name="Vitale D."/>
            <person name="Liguori R."/>
            <person name="Piravandi E."/>
            <person name="Massenet O."/>
            <person name="Quigley F."/>
            <person name="Clabauld G."/>
            <person name="Muendlein A."/>
            <person name="Felber R."/>
            <person name="Schnabl S."/>
            <person name="Hiller R."/>
            <person name="Schmidt W."/>
            <person name="Lecharny A."/>
            <person name="Aubourg S."/>
            <person name="Chefdor F."/>
            <person name="Cooke R."/>
            <person name="Berger C."/>
            <person name="Monfort A."/>
            <person name="Casacuberta E."/>
            <person name="Gibbons T."/>
            <person name="Weber N."/>
            <person name="Vandenbol M."/>
            <person name="Bargues M."/>
            <person name="Terol J."/>
            <person name="Torres A."/>
            <person name="Perez-Perez A."/>
            <person name="Purnelle B."/>
            <person name="Bent E."/>
            <person name="Johnson S."/>
            <person name="Tacon D."/>
            <person name="Jesse T."/>
            <person name="Heijnen L."/>
            <person name="Schwarz S."/>
            <person name="Scholler P."/>
            <person name="Heber S."/>
            <person name="Francs P."/>
            <person name="Bielke C."/>
            <person name="Frishman D."/>
            <person name="Haase D."/>
            <person name="Lemcke K."/>
            <person name="Mewes H.-W."/>
            <person name="Stocker S."/>
            <person name="Zaccaria P."/>
            <person name="Bevan M."/>
            <person name="Wilson R.K."/>
            <person name="de la Bastide M."/>
            <person name="Habermann K."/>
            <person name="Parnell L."/>
            <person name="Dedhia N."/>
            <person name="Gnoj L."/>
            <person name="Schutz K."/>
            <person name="Huang E."/>
            <person name="Spiegel L."/>
            <person name="Sekhon M."/>
            <person name="Murray J."/>
            <person name="Sheet P."/>
            <person name="Cordes M."/>
            <person name="Abu-Threideh J."/>
            <person name="Stoneking T."/>
            <person name="Kalicki J."/>
            <person name="Graves T."/>
            <person name="Harmon G."/>
            <person name="Edwards J."/>
            <person name="Latreille P."/>
            <person name="Courtney L."/>
            <person name="Cloud J."/>
            <person name="Abbott A."/>
            <person name="Scott K."/>
            <person name="Johnson D."/>
            <person name="Minx P."/>
            <person name="Bentley D."/>
            <person name="Fulton B."/>
            <person name="Miller N."/>
            <person name="Greco T."/>
            <person name="Kemp K."/>
            <person name="Kramer J."/>
            <person name="Fulton L."/>
            <person name="Mardis E."/>
            <person name="Dante M."/>
            <person name="Pepin K."/>
            <person name="Hillier L.W."/>
            <person name="Nelson J."/>
            <person name="Spieth J."/>
            <person name="Ryan E."/>
            <person name="Andrews S."/>
            <person name="Geisel C."/>
            <person name="Layman D."/>
            <person name="Du H."/>
            <person name="Ali J."/>
            <person name="Berghoff A."/>
            <person name="Jones K."/>
            <person name="Drone K."/>
            <person name="Cotton M."/>
            <person name="Joshu C."/>
            <person name="Antonoiu B."/>
            <person name="Zidanic M."/>
            <person name="Strong C."/>
            <person name="Sun H."/>
            <person name="Lamar B."/>
            <person name="Yordan C."/>
            <person name="Ma P."/>
            <person name="Zhong J."/>
            <person name="Preston R."/>
            <person name="Vil D."/>
            <person name="Shekher M."/>
            <person name="Matero A."/>
            <person name="Shah R."/>
            <person name="Swaby I.K."/>
            <person name="O'Shaughnessy A."/>
            <person name="Rodriguez M."/>
            <person name="Hoffman J."/>
            <person name="Till S."/>
            <person name="Granat S."/>
            <person name="Shohdy N."/>
            <person name="Hasegawa A."/>
            <person name="Hameed A."/>
            <person name="Lodhi M."/>
            <person name="Johnson A."/>
            <person name="Chen E."/>
            <person name="Marra M.A."/>
            <person name="Martienssen R."/>
            <person name="McCombie W.R."/>
        </authorList>
    </citation>
    <scope>NUCLEOTIDE SEQUENCE [LARGE SCALE GENOMIC DNA]</scope>
    <source>
        <strain>cv. Columbia</strain>
    </source>
</reference>
<reference key="3">
    <citation type="journal article" date="2017" name="Plant J.">
        <title>Araport11: a complete reannotation of the Arabidopsis thaliana reference genome.</title>
        <authorList>
            <person name="Cheng C.Y."/>
            <person name="Krishnakumar V."/>
            <person name="Chan A.P."/>
            <person name="Thibaud-Nissen F."/>
            <person name="Schobel S."/>
            <person name="Town C.D."/>
        </authorList>
    </citation>
    <scope>GENOME REANNOTATION</scope>
    <source>
        <strain>cv. Columbia</strain>
    </source>
</reference>
<reference key="4">
    <citation type="journal article" date="2003" name="Science">
        <title>Empirical analysis of transcriptional activity in the Arabidopsis genome.</title>
        <authorList>
            <person name="Yamada K."/>
            <person name="Lim J."/>
            <person name="Dale J.M."/>
            <person name="Chen H."/>
            <person name="Shinn P."/>
            <person name="Palm C.J."/>
            <person name="Southwick A.M."/>
            <person name="Wu H.C."/>
            <person name="Kim C.J."/>
            <person name="Nguyen M."/>
            <person name="Pham P.K."/>
            <person name="Cheuk R.F."/>
            <person name="Karlin-Newmann G."/>
            <person name="Liu S.X."/>
            <person name="Lam B."/>
            <person name="Sakano H."/>
            <person name="Wu T."/>
            <person name="Yu G."/>
            <person name="Miranda M."/>
            <person name="Quach H.L."/>
            <person name="Tripp M."/>
            <person name="Chang C.H."/>
            <person name="Lee J.M."/>
            <person name="Toriumi M.J."/>
            <person name="Chan M.M."/>
            <person name="Tang C.C."/>
            <person name="Onodera C.S."/>
            <person name="Deng J.M."/>
            <person name="Akiyama K."/>
            <person name="Ansari Y."/>
            <person name="Arakawa T."/>
            <person name="Banh J."/>
            <person name="Banno F."/>
            <person name="Bowser L."/>
            <person name="Brooks S.Y."/>
            <person name="Carninci P."/>
            <person name="Chao Q."/>
            <person name="Choy N."/>
            <person name="Enju A."/>
            <person name="Goldsmith A.D."/>
            <person name="Gurjal M."/>
            <person name="Hansen N.F."/>
            <person name="Hayashizaki Y."/>
            <person name="Johnson-Hopson C."/>
            <person name="Hsuan V.W."/>
            <person name="Iida K."/>
            <person name="Karnes M."/>
            <person name="Khan S."/>
            <person name="Koesema E."/>
            <person name="Ishida J."/>
            <person name="Jiang P.X."/>
            <person name="Jones T."/>
            <person name="Kawai J."/>
            <person name="Kamiya A."/>
            <person name="Meyers C."/>
            <person name="Nakajima M."/>
            <person name="Narusaka M."/>
            <person name="Seki M."/>
            <person name="Sakurai T."/>
            <person name="Satou M."/>
            <person name="Tamse R."/>
            <person name="Vaysberg M."/>
            <person name="Wallender E.K."/>
            <person name="Wong C."/>
            <person name="Yamamura Y."/>
            <person name="Yuan S."/>
            <person name="Shinozaki K."/>
            <person name="Davis R.W."/>
            <person name="Theologis A."/>
            <person name="Ecker J.R."/>
        </authorList>
    </citation>
    <scope>NUCLEOTIDE SEQUENCE [LARGE SCALE MRNA]</scope>
    <source>
        <strain>cv. Columbia</strain>
    </source>
</reference>
<reference key="5">
    <citation type="journal article" date="2002" name="Science">
        <title>Functional annotation of a full-length Arabidopsis cDNA collection.</title>
        <authorList>
            <person name="Seki M."/>
            <person name="Narusaka M."/>
            <person name="Kamiya A."/>
            <person name="Ishida J."/>
            <person name="Satou M."/>
            <person name="Sakurai T."/>
            <person name="Nakajima M."/>
            <person name="Enju A."/>
            <person name="Akiyama K."/>
            <person name="Oono Y."/>
            <person name="Muramatsu M."/>
            <person name="Hayashizaki Y."/>
            <person name="Kawai J."/>
            <person name="Carninci P."/>
            <person name="Itoh M."/>
            <person name="Ishii Y."/>
            <person name="Arakawa T."/>
            <person name="Shibata K."/>
            <person name="Shinagawa A."/>
            <person name="Shinozaki K."/>
        </authorList>
    </citation>
    <scope>NUCLEOTIDE SEQUENCE [LARGE SCALE MRNA]</scope>
    <source>
        <strain>cv. Columbia</strain>
    </source>
</reference>
<reference key="6">
    <citation type="journal article" date="2011" name="Phytochemistry">
        <title>Autophosphorylation profiling of Arabidopsis protein kinases using the cell-free system.</title>
        <authorList>
            <person name="Nemoto K."/>
            <person name="Seto T."/>
            <person name="Takahashi H."/>
            <person name="Nozawa A."/>
            <person name="Seki M."/>
            <person name="Shinozaki K."/>
            <person name="Endo Y."/>
            <person name="Sawasaki T."/>
        </authorList>
    </citation>
    <scope>AUTOPHOSPHORYLATION</scope>
</reference>
<reference key="7">
    <citation type="journal article" date="2013" name="Plant Cell">
        <title>Arabidopsis casein kinase1 proteins CK1.3 and CK1.4 phosphorylate cryptochrome2 to regulate blue light signaling.</title>
        <authorList>
            <person name="Tan S.-T."/>
            <person name="Dai C."/>
            <person name="Liu H.-T."/>
            <person name="Xue H.-W."/>
        </authorList>
    </citation>
    <scope>FUNCTION</scope>
    <scope>DISRUPTION PHENOTYPE</scope>
    <scope>INDUCTION BY BLUE LIGHT</scope>
    <scope>TISSUE SPECIFICITY</scope>
    <scope>SUBCELLULAR LOCATION</scope>
    <source>
        <strain>cv. Columbia</strain>
    </source>
</reference>
<sequence length="415" mass="46891">MERIIGGKYKLGRKIGGGSFGEIFLATHVDTFEIVAVKIENSKTKHPQLLYEAKLYRILEGGSGIPRIKWFGVDGTENALVMDLLGPSLEDLFVYCGRKFSPKTVLMLADQMLTRIEFVHSKGYLHRDIKPDNFLMGLGRKANQVYLIDFGLAKRYRDANTNRHIPYRENKNLTGTARYASCNTHLGIEQSRRDDLESLGYVLLYFLRGSLPWQGLKAVDKKQKYDKICEKKISTPIEVLCKNHPVEFASYFHYCHTLTFDQRPDYGFLKRLFRDLFSREGYEFDYIFDWTIIKYQQAQKSRNQSQAVPGSSNPRAMPVDTSNHRGGPNISYEAEASERVRSANAIGPSPQINNNTAAGRTPGFDHPVHKNMNMPSTSLSPAGTSKRNVGPETSNSGYGSGNRTGWTSSFMSPEK</sequence>
<gene>
    <name evidence="6" type="primary">CKL3</name>
    <name evidence="9" type="ordered locus">At4g28880</name>
    <name evidence="10" type="ORF">F16A16.10</name>
</gene>
<accession>Q93Z18</accession>
<accession>Q9SVV5</accession>
<comment type="function">
    <text evidence="5">Protein kinase involved in blue light responses (e.g. hypocotyl elongation and flowering) by phosphorylating CRY2 to reduce its stability.</text>
</comment>
<comment type="catalytic activity">
    <reaction evidence="5">
        <text>L-seryl-[protein] + ATP = O-phospho-L-seryl-[protein] + ADP + H(+)</text>
        <dbReference type="Rhea" id="RHEA:17989"/>
        <dbReference type="Rhea" id="RHEA-COMP:9863"/>
        <dbReference type="Rhea" id="RHEA-COMP:11604"/>
        <dbReference type="ChEBI" id="CHEBI:15378"/>
        <dbReference type="ChEBI" id="CHEBI:29999"/>
        <dbReference type="ChEBI" id="CHEBI:30616"/>
        <dbReference type="ChEBI" id="CHEBI:83421"/>
        <dbReference type="ChEBI" id="CHEBI:456216"/>
        <dbReference type="EC" id="2.7.11.1"/>
    </reaction>
</comment>
<comment type="catalytic activity">
    <reaction evidence="5">
        <text>L-threonyl-[protein] + ATP = O-phospho-L-threonyl-[protein] + ADP + H(+)</text>
        <dbReference type="Rhea" id="RHEA:46608"/>
        <dbReference type="Rhea" id="RHEA-COMP:11060"/>
        <dbReference type="Rhea" id="RHEA-COMP:11605"/>
        <dbReference type="ChEBI" id="CHEBI:15378"/>
        <dbReference type="ChEBI" id="CHEBI:30013"/>
        <dbReference type="ChEBI" id="CHEBI:30616"/>
        <dbReference type="ChEBI" id="CHEBI:61977"/>
        <dbReference type="ChEBI" id="CHEBI:456216"/>
        <dbReference type="EC" id="2.7.11.1"/>
    </reaction>
</comment>
<comment type="interaction">
    <interactant intactId="EBI-4442347">
        <id>Q93Z18</id>
    </interactant>
    <interactant intactId="EBI-2009699">
        <id>Q9MA55</id>
        <label>ACBP4</label>
    </interactant>
    <organismsDiffer>false</organismsDiffer>
    <experiments>3</experiments>
</comment>
<comment type="interaction">
    <interactant intactId="EBI-4442347">
        <id>Q93Z18</id>
    </interactant>
    <interactant intactId="EBI-4435064">
        <id>Q8H1G0</id>
        <label>GATA28</label>
    </interactant>
    <organismsDiffer>false</organismsDiffer>
    <experiments>3</experiments>
</comment>
<comment type="interaction">
    <interactant intactId="EBI-4442347">
        <id>Q93Z18</id>
    </interactant>
    <interactant intactId="EBI-4424954">
        <id>Q9M000</id>
        <label>SCL22</label>
    </interactant>
    <organismsDiffer>false</organismsDiffer>
    <experiments>3</experiments>
</comment>
<comment type="subcellular location">
    <subcellularLocation>
        <location evidence="3 5">Cytoplasm</location>
    </subcellularLocation>
    <subcellularLocation>
        <location evidence="3 5">Nucleus</location>
    </subcellularLocation>
    <text evidence="5">Translocates mostly in nucleus upon blue light treatment, especially in nuclear bodies.</text>
</comment>
<comment type="tissue specificity">
    <text evidence="5">Expressed in seedlings, stems, leaves and flowers.</text>
</comment>
<comment type="induction">
    <text evidence="5">Induced by blue light.</text>
</comment>
<comment type="PTM">
    <text evidence="4">Slightly autophosphorylated.</text>
</comment>
<comment type="disruption phenotype">
    <text evidence="5">Hypersensitivity to blue light (BL) leading to shortened hypocotyls in BL.</text>
</comment>
<comment type="similarity">
    <text evidence="8">Belongs to the protein kinase superfamily. CK1 Ser/Thr protein kinase family. Casein kinase I subfamily.</text>
</comment>
<comment type="sequence caution" evidence="8">
    <conflict type="erroneous gene model prediction">
        <sequence resource="EMBL-CDS" id="CAA22964"/>
    </conflict>
</comment>
<comment type="sequence caution" evidence="8">
    <conflict type="erroneous gene model prediction">
        <sequence resource="EMBL-CDS" id="CAB81476"/>
    </conflict>
</comment>
<feature type="chain" id="PRO_0000436021" description="Casein kinase 1-like protein 3">
    <location>
        <begin position="1"/>
        <end position="415"/>
    </location>
</feature>
<feature type="domain" description="Protein kinase" evidence="1">
    <location>
        <begin position="9"/>
        <end position="277"/>
    </location>
</feature>
<feature type="region of interest" description="Disordered" evidence="2">
    <location>
        <begin position="303"/>
        <end position="330"/>
    </location>
</feature>
<feature type="region of interest" description="Disordered" evidence="2">
    <location>
        <begin position="344"/>
        <end position="415"/>
    </location>
</feature>
<feature type="compositionally biased region" description="Polar residues" evidence="2">
    <location>
        <begin position="303"/>
        <end position="314"/>
    </location>
</feature>
<feature type="compositionally biased region" description="Polar residues" evidence="2">
    <location>
        <begin position="373"/>
        <end position="415"/>
    </location>
</feature>
<feature type="active site" description="Proton acceptor" evidence="1">
    <location>
        <position position="128"/>
    </location>
</feature>
<feature type="binding site" evidence="1">
    <location>
        <begin position="15"/>
        <end position="23"/>
    </location>
    <ligand>
        <name>ATP</name>
        <dbReference type="ChEBI" id="CHEBI:30616"/>
    </ligand>
</feature>
<feature type="binding site" evidence="1">
    <location>
        <position position="38"/>
    </location>
    <ligand>
        <name>ATP</name>
        <dbReference type="ChEBI" id="CHEBI:30616"/>
    </ligand>
</feature>